<comment type="function">
    <text evidence="1 2">Tryptase is the major neutral protease present in mast cells and is secreted upon the coupled activation-degranulation response of this cell type. May play a role in innate immunity.</text>
</comment>
<comment type="catalytic activity">
    <reaction>
        <text>Preferential cleavage: Arg-|-Xaa, Lys-|-Xaa, but with more restricted specificity than trypsin.</text>
        <dbReference type="EC" id="3.4.21.59"/>
    </reaction>
</comment>
<comment type="subunit">
    <text evidence="6">Homotetramer. The active tetramer is converted to inactive monomers at neutral and acidic pH in the absence of heparin. Low concentrations of inactive monomers become active monomers at pH 6.0 in the presence of heparin. When the concentration of active monomers is higher, they convert to active monomers and then to active tetramers. These monomers are active and functionally distinct from the tetrameric enzyme. In contrast to the hidden active sites in the tetrameric form, the active site of the monomeric form is accessible for macromolecular proteins and inhibitors, e.g. fibrinogen which is a substrate for the monomeric but not for the tetrameric form. The monomeric form forms a complex with SERPINB6.</text>
</comment>
<comment type="subcellular location">
    <subcellularLocation>
        <location>Secreted</location>
    </subcellularLocation>
    <text>Released from the secretory granules upon mast cell activation.</text>
</comment>
<comment type="polymorphism">
    <text evidence="7 8 9 10 11">There are two alleles; beta-II and beta-III. There are two forms of the beta-III allele, a short and a long form. The short form (also named frameshifted form) is carried by 23% and 19% of individuals of European and African ancestry but 0% of Asian subjects. The sequence shown is that of allele beta-III short form.</text>
</comment>
<comment type="similarity">
    <text evidence="4">Belongs to the peptidase S1 family. Tryptase subfamily.</text>
</comment>
<dbReference type="EC" id="3.4.21.59"/>
<dbReference type="EMBL" id="M37488">
    <property type="protein sequence ID" value="AAA51843.1"/>
    <property type="molecule type" value="mRNA"/>
</dbReference>
<dbReference type="EMBL" id="S55551">
    <property type="protein sequence ID" value="AAD13876.1"/>
    <property type="molecule type" value="mRNA"/>
</dbReference>
<dbReference type="EMBL" id="AF099143">
    <property type="protein sequence ID" value="AAD17859.2"/>
    <property type="molecule type" value="Genomic_DNA"/>
</dbReference>
<dbReference type="EMBL" id="AF099145">
    <property type="protein sequence ID" value="AAD17857.1"/>
    <property type="molecule type" value="Genomic_DNA"/>
</dbReference>
<dbReference type="EMBL" id="AF099146">
    <property type="protein sequence ID" value="AAD17858.1"/>
    <property type="molecule type" value="Genomic_DNA"/>
</dbReference>
<dbReference type="EMBL" id="FJ931117">
    <property type="protein sequence ID" value="ACZ98911.1"/>
    <property type="molecule type" value="Genomic_DNA"/>
</dbReference>
<dbReference type="EMBL" id="FJ931120">
    <property type="protein sequence ID" value="ACZ98913.1"/>
    <property type="molecule type" value="mRNA"/>
</dbReference>
<dbReference type="EMBL" id="AC120498">
    <property type="status" value="NOT_ANNOTATED_CDS"/>
    <property type="molecule type" value="Genomic_DNA"/>
</dbReference>
<dbReference type="EMBL" id="BC029356">
    <property type="protein sequence ID" value="AAH29356.1"/>
    <property type="molecule type" value="mRNA"/>
</dbReference>
<dbReference type="EMBL" id="M33492">
    <property type="protein sequence ID" value="AAA36779.1"/>
    <property type="molecule type" value="mRNA"/>
</dbReference>
<dbReference type="EMBL" id="M33493">
    <property type="protein sequence ID" value="AAA36780.1"/>
    <property type="molecule type" value="mRNA"/>
</dbReference>
<dbReference type="PIR" id="B35863">
    <property type="entry name" value="B35863"/>
</dbReference>
<dbReference type="PIR" id="C35863">
    <property type="entry name" value="C35863"/>
</dbReference>
<dbReference type="RefSeq" id="NP_077078.5">
    <property type="nucleotide sequence ID" value="NM_024164.5"/>
</dbReference>
<dbReference type="PDB" id="1A0L">
    <property type="method" value="X-ray"/>
    <property type="resolution" value="3.00 A"/>
    <property type="chains" value="A/B/C/D=31-274"/>
</dbReference>
<dbReference type="PDB" id="2BM2">
    <property type="method" value="X-ray"/>
    <property type="resolution" value="2.20 A"/>
    <property type="chains" value="A/B/C/D=31-275"/>
</dbReference>
<dbReference type="PDB" id="2FPZ">
    <property type="method" value="X-ray"/>
    <property type="resolution" value="2.00 A"/>
    <property type="chains" value="A/B/C/D=31-275"/>
</dbReference>
<dbReference type="PDB" id="2FS8">
    <property type="method" value="X-ray"/>
    <property type="resolution" value="2.50 A"/>
    <property type="chains" value="A/B/C/D=31-275"/>
</dbReference>
<dbReference type="PDB" id="2FS9">
    <property type="method" value="X-ray"/>
    <property type="resolution" value="2.30 A"/>
    <property type="chains" value="A/B/C/D=31-275"/>
</dbReference>
<dbReference type="PDB" id="2FWW">
    <property type="method" value="X-ray"/>
    <property type="resolution" value="2.25 A"/>
    <property type="chains" value="A/B/C/D=31-275"/>
</dbReference>
<dbReference type="PDB" id="2FXR">
    <property type="method" value="X-ray"/>
    <property type="resolution" value="2.50 A"/>
    <property type="chains" value="A/B/C/D=31-275"/>
</dbReference>
<dbReference type="PDB" id="2GDD">
    <property type="method" value="X-ray"/>
    <property type="resolution" value="2.35 A"/>
    <property type="chains" value="A/B/C/D=31-275"/>
</dbReference>
<dbReference type="PDB" id="2ZA5">
    <property type="method" value="X-ray"/>
    <property type="resolution" value="2.30 A"/>
    <property type="chains" value="A/B/C/D=31-275"/>
</dbReference>
<dbReference type="PDB" id="3V7T">
    <property type="method" value="X-ray"/>
    <property type="resolution" value="2.09 A"/>
    <property type="chains" value="A/B/C/D=31-275"/>
</dbReference>
<dbReference type="PDBsum" id="1A0L"/>
<dbReference type="PDBsum" id="2BM2"/>
<dbReference type="PDBsum" id="2FPZ"/>
<dbReference type="PDBsum" id="2FS8"/>
<dbReference type="PDBsum" id="2FS9"/>
<dbReference type="PDBsum" id="2FWW"/>
<dbReference type="PDBsum" id="2FXR"/>
<dbReference type="PDBsum" id="2GDD"/>
<dbReference type="PDBsum" id="2ZA5"/>
<dbReference type="PDBsum" id="3V7T"/>
<dbReference type="SMR" id="P20231"/>
<dbReference type="BioGRID" id="113029">
    <property type="interactions" value="15"/>
</dbReference>
<dbReference type="BioGRID" id="122201">
    <property type="interactions" value="99"/>
</dbReference>
<dbReference type="ComplexPortal" id="CPX-3805">
    <property type="entry name" value="Tryptase beta-2 complex"/>
</dbReference>
<dbReference type="FunCoup" id="P20231">
    <property type="interactions" value="91"/>
</dbReference>
<dbReference type="IntAct" id="P20231">
    <property type="interactions" value="19"/>
</dbReference>
<dbReference type="MINT" id="P20231"/>
<dbReference type="BindingDB" id="P20231"/>
<dbReference type="ChEMBL" id="CHEMBL4523196"/>
<dbReference type="DrugBank" id="DB04654">
    <property type="generic name" value="4-PIPERIDIN-4-YLBUTANAL"/>
</dbReference>
<dbReference type="DrugBank" id="DB04764">
    <property type="generic name" value="[4-(3-AMINOMETHYL-PHENYL)-PIPERIDIN-1-YL]-(5-PHENETHYL- PYRIDIN-3-YL)-METHANONE"/>
</dbReference>
<dbReference type="DrugBank" id="DB02018">
    <property type="generic name" value="Amido Phenyl Pyruvic Acid"/>
</dbReference>
<dbReference type="DrugBank" id="DB06962">
    <property type="generic name" value="JNJ-27390467"/>
</dbReference>
<dbReference type="MEROPS" id="S01.015"/>
<dbReference type="MEROPS" id="S01.143"/>
<dbReference type="GlyConnect" id="1862">
    <property type="glycosylation" value="10 N-Linked glycans (1 site)"/>
</dbReference>
<dbReference type="GlyCosmos" id="P20231">
    <property type="glycosylation" value="1 site, 9 glycans"/>
</dbReference>
<dbReference type="GlyGen" id="P20231">
    <property type="glycosylation" value="1 site, 9 N-linked glycans (1 site)"/>
</dbReference>
<dbReference type="iPTMnet" id="P20231"/>
<dbReference type="PhosphoSitePlus" id="P20231"/>
<dbReference type="BioMuta" id="TPSB2"/>
<dbReference type="DMDM" id="116242830"/>
<dbReference type="jPOST" id="P20231"/>
<dbReference type="MassIVE" id="P20231"/>
<dbReference type="PeptideAtlas" id="P20231"/>
<dbReference type="Antibodypedia" id="4287">
    <property type="antibodies" value="101 antibodies from 22 providers"/>
</dbReference>
<dbReference type="DNASU" id="7177"/>
<dbReference type="Ensembl" id="ENST00000606293.5">
    <property type="protein sequence ID" value="ENSP00000482743.1"/>
    <property type="gene ID" value="ENSG00000197253.14"/>
</dbReference>
<dbReference type="GeneID" id="64499"/>
<dbReference type="KEGG" id="hsa:64499"/>
<dbReference type="MANE-Select" id="ENST00000606293.5">
    <property type="protein sequence ID" value="ENSP00000482743.1"/>
    <property type="RefSeq nucleotide sequence ID" value="NM_024164.6"/>
    <property type="RefSeq protein sequence ID" value="NP_077078.5"/>
</dbReference>
<dbReference type="UCSC" id="uc032dnv.1">
    <property type="organism name" value="human"/>
</dbReference>
<dbReference type="AGR" id="HGNC:14120"/>
<dbReference type="CTD" id="64499"/>
<dbReference type="DisGeNET" id="64499"/>
<dbReference type="DisGeNET" id="7177"/>
<dbReference type="GeneCards" id="TPSB2"/>
<dbReference type="HGNC" id="HGNC:14120">
    <property type="gene designation" value="TPSB2"/>
</dbReference>
<dbReference type="HPA" id="ENSG00000197253">
    <property type="expression patterns" value="Low tissue specificity"/>
</dbReference>
<dbReference type="MIM" id="191081">
    <property type="type" value="gene"/>
</dbReference>
<dbReference type="neXtProt" id="NX_P20231"/>
<dbReference type="OpenTargets" id="ENSG00000197253"/>
<dbReference type="PharmGKB" id="PA36698"/>
<dbReference type="VEuPathDB" id="HostDB:ENSG00000197253"/>
<dbReference type="GeneTree" id="ENSGT00940000164974"/>
<dbReference type="HOGENOM" id="CLU_006842_13_1_1"/>
<dbReference type="InParanoid" id="P20231"/>
<dbReference type="OMA" id="WGQINSE"/>
<dbReference type="OrthoDB" id="10002959at2759"/>
<dbReference type="PAN-GO" id="P20231">
    <property type="GO annotations" value="3 GO annotations based on evolutionary models"/>
</dbReference>
<dbReference type="PhylomeDB" id="P20231"/>
<dbReference type="BRENDA" id="3.4.21.59">
    <property type="organism ID" value="2681"/>
</dbReference>
<dbReference type="PathwayCommons" id="P20231"/>
<dbReference type="SignaLink" id="P20231"/>
<dbReference type="BioGRID-ORCS" id="64499">
    <property type="hits" value="3 hits in 203 CRISPR screens"/>
</dbReference>
<dbReference type="BioGRID-ORCS" id="7177">
    <property type="hits" value="17 hits in 1103 CRISPR screens"/>
</dbReference>
<dbReference type="ChiTaRS" id="TPSB2">
    <property type="organism name" value="human"/>
</dbReference>
<dbReference type="EvolutionaryTrace" id="P20231"/>
<dbReference type="GeneWiki" id="TPSB2"/>
<dbReference type="Pharos" id="P20231">
    <property type="development level" value="Tchem"/>
</dbReference>
<dbReference type="PRO" id="PR:P20231"/>
<dbReference type="Proteomes" id="UP000005640">
    <property type="component" value="Chromosome 16"/>
</dbReference>
<dbReference type="RNAct" id="P20231">
    <property type="molecule type" value="protein"/>
</dbReference>
<dbReference type="Bgee" id="ENSG00000197253">
    <property type="expression patterns" value="Expressed in mucosa of stomach and 87 other cell types or tissues"/>
</dbReference>
<dbReference type="ExpressionAtlas" id="P20231">
    <property type="expression patterns" value="baseline and differential"/>
</dbReference>
<dbReference type="GO" id="GO:0062023">
    <property type="term" value="C:collagen-containing extracellular matrix"/>
    <property type="evidence" value="ECO:0007005"/>
    <property type="project" value="BHF-UCL"/>
</dbReference>
<dbReference type="GO" id="GO:0005615">
    <property type="term" value="C:extracellular space"/>
    <property type="evidence" value="ECO:0000318"/>
    <property type="project" value="GO_Central"/>
</dbReference>
<dbReference type="GO" id="GO:0004252">
    <property type="term" value="F:serine-type endopeptidase activity"/>
    <property type="evidence" value="ECO:0000318"/>
    <property type="project" value="GO_Central"/>
</dbReference>
<dbReference type="GO" id="GO:0008236">
    <property type="term" value="F:serine-type peptidase activity"/>
    <property type="evidence" value="ECO:0000304"/>
    <property type="project" value="ProtInc"/>
</dbReference>
<dbReference type="GO" id="GO:0006508">
    <property type="term" value="P:proteolysis"/>
    <property type="evidence" value="ECO:0000318"/>
    <property type="project" value="GO_Central"/>
</dbReference>
<dbReference type="CDD" id="cd00190">
    <property type="entry name" value="Tryp_SPc"/>
    <property type="match status" value="1"/>
</dbReference>
<dbReference type="FunFam" id="2.40.10.10:FF:000039">
    <property type="entry name" value="Brain-specific serine protease 4"/>
    <property type="match status" value="1"/>
</dbReference>
<dbReference type="Gene3D" id="2.40.10.10">
    <property type="entry name" value="Trypsin-like serine proteases"/>
    <property type="match status" value="2"/>
</dbReference>
<dbReference type="InterPro" id="IPR009003">
    <property type="entry name" value="Peptidase_S1_PA"/>
</dbReference>
<dbReference type="InterPro" id="IPR043504">
    <property type="entry name" value="Peptidase_S1_PA_chymotrypsin"/>
</dbReference>
<dbReference type="InterPro" id="IPR001314">
    <property type="entry name" value="Peptidase_S1A"/>
</dbReference>
<dbReference type="InterPro" id="IPR001254">
    <property type="entry name" value="Trypsin_dom"/>
</dbReference>
<dbReference type="InterPro" id="IPR018114">
    <property type="entry name" value="TRYPSIN_HIS"/>
</dbReference>
<dbReference type="InterPro" id="IPR033116">
    <property type="entry name" value="TRYPSIN_SER"/>
</dbReference>
<dbReference type="PANTHER" id="PTHR24253:SF144">
    <property type="entry name" value="CHYMOTRYPSIN-LIKE PROTEASE CTRL-1-RELATED"/>
    <property type="match status" value="1"/>
</dbReference>
<dbReference type="PANTHER" id="PTHR24253">
    <property type="entry name" value="TRANSMEMBRANE PROTEASE SERINE"/>
    <property type="match status" value="1"/>
</dbReference>
<dbReference type="Pfam" id="PF00089">
    <property type="entry name" value="Trypsin"/>
    <property type="match status" value="1"/>
</dbReference>
<dbReference type="PRINTS" id="PR00722">
    <property type="entry name" value="CHYMOTRYPSIN"/>
</dbReference>
<dbReference type="SMART" id="SM00020">
    <property type="entry name" value="Tryp_SPc"/>
    <property type="match status" value="1"/>
</dbReference>
<dbReference type="SUPFAM" id="SSF50494">
    <property type="entry name" value="Trypsin-like serine proteases"/>
    <property type="match status" value="1"/>
</dbReference>
<dbReference type="PROSITE" id="PS50240">
    <property type="entry name" value="TRYPSIN_DOM"/>
    <property type="match status" value="1"/>
</dbReference>
<dbReference type="PROSITE" id="PS00134">
    <property type="entry name" value="TRYPSIN_HIS"/>
    <property type="match status" value="1"/>
</dbReference>
<dbReference type="PROSITE" id="PS00135">
    <property type="entry name" value="TRYPSIN_SER"/>
    <property type="match status" value="1"/>
</dbReference>
<sequence length="275" mass="30651">MLNLLLLALPVLASRAYAAPAPGQALQRVGIVGGQEAPRSKWPWQVSLRVRDRYWMHFCGGSLIHPQWVLTAAHCVGPDVKDLAALRVQLREQHLYYQDQLLPVSRIIVHPQFYTAQIGADIALLELEEPVNVSSHVHTVTLPPASETFPPGMPCWVTGWGDVDNDERLPPPFPLKQVKVPIMENHICDAKYHLGAYTGDDVRIVRDDMLCAGNTRRDSCQGDSGGPLVCKVNGTWLQAGVVSWGEGCAQPNRPGIYTRVTYYLDWIHHYVPKKP</sequence>
<protein>
    <recommendedName>
        <fullName>Tryptase beta-2</fullName>
        <shortName>Tryptase-2</shortName>
        <ecNumber>3.4.21.59</ecNumber>
    </recommendedName>
    <alternativeName>
        <fullName>Tryptase II</fullName>
    </alternativeName>
</protein>
<organism>
    <name type="scientific">Homo sapiens</name>
    <name type="common">Human</name>
    <dbReference type="NCBI Taxonomy" id="9606"/>
    <lineage>
        <taxon>Eukaryota</taxon>
        <taxon>Metazoa</taxon>
        <taxon>Chordata</taxon>
        <taxon>Craniata</taxon>
        <taxon>Vertebrata</taxon>
        <taxon>Euteleostomi</taxon>
        <taxon>Mammalia</taxon>
        <taxon>Eutheria</taxon>
        <taxon>Euarchontoglires</taxon>
        <taxon>Primates</taxon>
        <taxon>Haplorrhini</taxon>
        <taxon>Catarrhini</taxon>
        <taxon>Hominidae</taxon>
        <taxon>Homo</taxon>
    </lineage>
</organism>
<feature type="signal peptide" evidence="3">
    <location>
        <begin position="1"/>
        <end position="18"/>
    </location>
</feature>
<feature type="propeptide" id="PRO_0000027481" description="Activation peptide">
    <location>
        <begin position="19"/>
        <end position="30"/>
    </location>
</feature>
<feature type="chain" id="PRO_0000027482" description="Tryptase beta-2">
    <location>
        <begin position="31"/>
        <end position="275"/>
    </location>
</feature>
<feature type="domain" description="Peptidase S1" evidence="4">
    <location>
        <begin position="31"/>
        <end position="272"/>
    </location>
</feature>
<feature type="active site" description="Charge relay system" evidence="4">
    <location>
        <position position="74"/>
    </location>
</feature>
<feature type="active site" description="Charge relay system" evidence="4">
    <location>
        <position position="121"/>
    </location>
</feature>
<feature type="active site" description="Charge relay system" evidence="4">
    <location>
        <position position="224"/>
    </location>
</feature>
<feature type="modified residue" description="Phosphotyrosine" evidence="2">
    <location>
        <position position="97"/>
    </location>
</feature>
<feature type="glycosylation site" description="N-linked (GlcNAc...) asparagine" evidence="3">
    <location>
        <position position="233"/>
    </location>
</feature>
<feature type="disulfide bond" evidence="4">
    <location>
        <begin position="59"/>
        <end position="75"/>
    </location>
</feature>
<feature type="disulfide bond" evidence="4">
    <location>
        <begin position="155"/>
        <end position="230"/>
    </location>
</feature>
<feature type="disulfide bond" evidence="4">
    <location>
        <begin position="188"/>
        <end position="211"/>
    </location>
</feature>
<feature type="disulfide bond" evidence="4">
    <location>
        <begin position="220"/>
        <end position="248"/>
    </location>
</feature>
<feature type="sequence variant" id="VAR_088016" description="In allele beta-II; dbSNP:rs752157957." evidence="5 7 8 9 10">
    <original>R</original>
    <variation>H</variation>
    <location>
        <position position="51"/>
    </location>
</feature>
<feature type="sequence variant" id="VAR_088017" description="In allele beta-II; dbSNP:rs775724245." evidence="5 7 8 9 10">
    <original>D</original>
    <variation>G</variation>
    <location>
        <position position="52"/>
    </location>
</feature>
<feature type="sequence variant" id="VAR_088018" description="In allele beta-II; dbSNP:rs200873299." evidence="5 7 8 9 10">
    <original>R</original>
    <variation>P</variation>
    <location>
        <position position="53"/>
    </location>
</feature>
<feature type="sequence conflict" description="In Ref. 1; AAA51843, 2; AAD13876, 3; AAD17858, 5; ACZ98911, 7; AAH29356 and 8; AAA36779/AAA36780." evidence="12" ref="1 2 3 5 7 8">
    <original>N</original>
    <variation>K</variation>
    <location>
        <position position="132"/>
    </location>
</feature>
<feature type="sequence conflict" description="In Ref. 5; ACZ98913." evidence="12" ref="5">
    <original>T</original>
    <variation>A</variation>
    <location>
        <position position="141"/>
    </location>
</feature>
<feature type="sequence conflict" description="In Ref. 5; ACZ98913." evidence="12" ref="5">
    <original>G</original>
    <variation>D</variation>
    <location>
        <position position="240"/>
    </location>
</feature>
<feature type="strand" evidence="16">
    <location>
        <begin position="32"/>
        <end position="36"/>
    </location>
</feature>
<feature type="strand" evidence="13">
    <location>
        <begin position="39"/>
        <end position="41"/>
    </location>
</feature>
<feature type="strand" evidence="14">
    <location>
        <begin position="45"/>
        <end position="50"/>
    </location>
</feature>
<feature type="strand" evidence="14">
    <location>
        <begin position="52"/>
        <end position="54"/>
    </location>
</feature>
<feature type="strand" evidence="14">
    <location>
        <begin position="56"/>
        <end position="65"/>
    </location>
</feature>
<feature type="strand" evidence="14">
    <location>
        <begin position="68"/>
        <end position="71"/>
    </location>
</feature>
<feature type="helix" evidence="14">
    <location>
        <begin position="73"/>
        <end position="76"/>
    </location>
</feature>
<feature type="helix" evidence="14">
    <location>
        <begin position="83"/>
        <end position="85"/>
    </location>
</feature>
<feature type="strand" evidence="14">
    <location>
        <begin position="86"/>
        <end position="89"/>
    </location>
</feature>
<feature type="turn" evidence="14">
    <location>
        <begin position="95"/>
        <end position="98"/>
    </location>
</feature>
<feature type="strand" evidence="14">
    <location>
        <begin position="102"/>
        <end position="109"/>
    </location>
</feature>
<feature type="turn" evidence="14">
    <location>
        <begin position="116"/>
        <end position="118"/>
    </location>
</feature>
<feature type="strand" evidence="14">
    <location>
        <begin position="123"/>
        <end position="129"/>
    </location>
</feature>
<feature type="strand" evidence="14">
    <location>
        <begin position="135"/>
        <end position="137"/>
    </location>
</feature>
<feature type="strand" evidence="14">
    <location>
        <begin position="154"/>
        <end position="161"/>
    </location>
</feature>
<feature type="strand" evidence="14">
    <location>
        <begin position="176"/>
        <end position="183"/>
    </location>
</feature>
<feature type="helix" evidence="14">
    <location>
        <begin position="185"/>
        <end position="193"/>
    </location>
</feature>
<feature type="strand" evidence="14">
    <location>
        <begin position="209"/>
        <end position="212"/>
    </location>
</feature>
<feature type="strand" evidence="14">
    <location>
        <begin position="215"/>
        <end position="218"/>
    </location>
</feature>
<feature type="turn" evidence="15">
    <location>
        <begin position="221"/>
        <end position="225"/>
    </location>
</feature>
<feature type="strand" evidence="14">
    <location>
        <begin position="227"/>
        <end position="232"/>
    </location>
</feature>
<feature type="strand" evidence="14">
    <location>
        <begin position="235"/>
        <end position="244"/>
    </location>
</feature>
<feature type="strand" evidence="14">
    <location>
        <begin position="246"/>
        <end position="250"/>
    </location>
</feature>
<feature type="strand" evidence="14">
    <location>
        <begin position="255"/>
        <end position="259"/>
    </location>
</feature>
<feature type="helix" evidence="14">
    <location>
        <begin position="260"/>
        <end position="263"/>
    </location>
</feature>
<feature type="helix" evidence="14">
    <location>
        <begin position="264"/>
        <end position="267"/>
    </location>
</feature>
<feature type="turn" evidence="14">
    <location>
        <begin position="268"/>
        <end position="270"/>
    </location>
</feature>
<keyword id="KW-0002">3D-structure</keyword>
<keyword id="KW-1015">Disulfide bond</keyword>
<keyword id="KW-0325">Glycoprotein</keyword>
<keyword id="KW-0378">Hydrolase</keyword>
<keyword id="KW-0597">Phosphoprotein</keyword>
<keyword id="KW-0645">Protease</keyword>
<keyword id="KW-1267">Proteomics identification</keyword>
<keyword id="KW-1185">Reference proteome</keyword>
<keyword id="KW-0964">Secreted</keyword>
<keyword id="KW-0720">Serine protease</keyword>
<keyword id="KW-0732">Signal</keyword>
<keyword id="KW-0865">Zymogen</keyword>
<reference key="1">
    <citation type="journal article" date="1990" name="J. Clin. Invest.">
        <title>Cloning and characterization of a second complementary DNA for human tryptase.</title>
        <authorList>
            <person name="Miller J.S."/>
            <person name="Moxley G."/>
            <person name="Schwartz L.B."/>
        </authorList>
    </citation>
    <scope>NUCLEOTIDE SEQUENCE [MRNA] (ALLELE BETA-2)</scope>
    <scope>VARIANTS HIS-51; GLY-52 AND PRO-53</scope>
    <source>
        <tissue>Lung</tissue>
    </source>
</reference>
<reference key="2">
    <citation type="journal article" date="1993" name="Scand. J. Immunol.">
        <title>Characterization of a tryptase mRNA expressed in the human basophil cell line KU812.</title>
        <authorList>
            <person name="Blom T."/>
            <person name="Hellman L."/>
        </authorList>
    </citation>
    <scope>NUCLEOTIDE SEQUENCE [MRNA] (ALLELE BETA-2)</scope>
    <scope>VARIANTS HIS-51; GLY-52 AND PRO-53</scope>
</reference>
<reference key="3">
    <citation type="journal article" date="1999" name="J. Biol. Chem.">
        <title>Characterization of genes encoding known and novel human mast cell tryptases on chromosome 16p13.3.</title>
        <authorList>
            <person name="Pallaoro M."/>
            <person name="Fejzo M.S."/>
            <person name="Shayesteh L."/>
            <person name="Blount J.L."/>
            <person name="Caughey G.H."/>
        </authorList>
    </citation>
    <scope>NUCLEOTIDE SEQUENCE [GENOMIC DNA] (VARIANTS BETA-2 AND BETA-3)</scope>
</reference>
<reference key="4">
    <citation type="submission" date="2001-10" db="EMBL/GenBank/DDBJ databases">
        <authorList>
            <person name="Pallaoro M."/>
            <person name="Fejzo M.S."/>
            <person name="Shayesteh L."/>
            <person name="Blount J.L."/>
            <person name="Caughey G.H."/>
        </authorList>
    </citation>
    <scope>SEQUENCE REVISION</scope>
</reference>
<reference key="5">
    <citation type="journal article" date="2009" name="J. Allergy Clin. Immunol.">
        <title>Human subjects are protected from mast cell tryptase deficiency despite frequent inheritance of loss-of-function mutations.</title>
        <authorList>
            <person name="Trivedi N.N."/>
            <person name="Tamraz B."/>
            <person name="Chu C."/>
            <person name="Kwok P.Y."/>
            <person name="Caughey G.H."/>
        </authorList>
    </citation>
    <scope>NUCLEOTIDE SEQUENCE [GENOMIC DNA] (ALLELE BETA-2)</scope>
    <scope>NUCLEOTIDE SEQUENCE [MRNA] OF 50-275 (VARIANT BETA-3)</scope>
    <scope>VARIANTS HIS-51; GLY-52 AND PRO-53</scope>
</reference>
<reference key="6">
    <citation type="journal article" date="2004" name="Nature">
        <title>The sequence and analysis of duplication-rich human chromosome 16.</title>
        <authorList>
            <person name="Martin J."/>
            <person name="Han C."/>
            <person name="Gordon L.A."/>
            <person name="Terry A."/>
            <person name="Prabhakar S."/>
            <person name="She X."/>
            <person name="Xie G."/>
            <person name="Hellsten U."/>
            <person name="Chan Y.M."/>
            <person name="Altherr M."/>
            <person name="Couronne O."/>
            <person name="Aerts A."/>
            <person name="Bajorek E."/>
            <person name="Black S."/>
            <person name="Blumer H."/>
            <person name="Branscomb E."/>
            <person name="Brown N.C."/>
            <person name="Bruno W.J."/>
            <person name="Buckingham J.M."/>
            <person name="Callen D.F."/>
            <person name="Campbell C.S."/>
            <person name="Campbell M.L."/>
            <person name="Campbell E.W."/>
            <person name="Caoile C."/>
            <person name="Challacombe J.F."/>
            <person name="Chasteen L.A."/>
            <person name="Chertkov O."/>
            <person name="Chi H.C."/>
            <person name="Christensen M."/>
            <person name="Clark L.M."/>
            <person name="Cohn J.D."/>
            <person name="Denys M."/>
            <person name="Detter J.C."/>
            <person name="Dickson M."/>
            <person name="Dimitrijevic-Bussod M."/>
            <person name="Escobar J."/>
            <person name="Fawcett J.J."/>
            <person name="Flowers D."/>
            <person name="Fotopulos D."/>
            <person name="Glavina T."/>
            <person name="Gomez M."/>
            <person name="Gonzales E."/>
            <person name="Goodstein D."/>
            <person name="Goodwin L.A."/>
            <person name="Grady D.L."/>
            <person name="Grigoriev I."/>
            <person name="Groza M."/>
            <person name="Hammon N."/>
            <person name="Hawkins T."/>
            <person name="Haydu L."/>
            <person name="Hildebrand C.E."/>
            <person name="Huang W."/>
            <person name="Israni S."/>
            <person name="Jett J."/>
            <person name="Jewett P.B."/>
            <person name="Kadner K."/>
            <person name="Kimball H."/>
            <person name="Kobayashi A."/>
            <person name="Krawczyk M.-C."/>
            <person name="Leyba T."/>
            <person name="Longmire J.L."/>
            <person name="Lopez F."/>
            <person name="Lou Y."/>
            <person name="Lowry S."/>
            <person name="Ludeman T."/>
            <person name="Manohar C.F."/>
            <person name="Mark G.A."/>
            <person name="McMurray K.L."/>
            <person name="Meincke L.J."/>
            <person name="Morgan J."/>
            <person name="Moyzis R.K."/>
            <person name="Mundt M.O."/>
            <person name="Munk A.C."/>
            <person name="Nandkeshwar R.D."/>
            <person name="Pitluck S."/>
            <person name="Pollard M."/>
            <person name="Predki P."/>
            <person name="Parson-Quintana B."/>
            <person name="Ramirez L."/>
            <person name="Rash S."/>
            <person name="Retterer J."/>
            <person name="Ricke D.O."/>
            <person name="Robinson D.L."/>
            <person name="Rodriguez A."/>
            <person name="Salamov A."/>
            <person name="Saunders E.H."/>
            <person name="Scott D."/>
            <person name="Shough T."/>
            <person name="Stallings R.L."/>
            <person name="Stalvey M."/>
            <person name="Sutherland R.D."/>
            <person name="Tapia R."/>
            <person name="Tesmer J.G."/>
            <person name="Thayer N."/>
            <person name="Thompson L.S."/>
            <person name="Tice H."/>
            <person name="Torney D.C."/>
            <person name="Tran-Gyamfi M."/>
            <person name="Tsai M."/>
            <person name="Ulanovsky L.E."/>
            <person name="Ustaszewska A."/>
            <person name="Vo N."/>
            <person name="White P.S."/>
            <person name="Williams A.L."/>
            <person name="Wills P.L."/>
            <person name="Wu J.-R."/>
            <person name="Wu K."/>
            <person name="Yang J."/>
            <person name="DeJong P."/>
            <person name="Bruce D."/>
            <person name="Doggett N.A."/>
            <person name="Deaven L."/>
            <person name="Schmutz J."/>
            <person name="Grimwood J."/>
            <person name="Richardson P."/>
            <person name="Rokhsar D.S."/>
            <person name="Eichler E.E."/>
            <person name="Gilna P."/>
            <person name="Lucas S.M."/>
            <person name="Myers R.M."/>
            <person name="Rubin E.M."/>
            <person name="Pennacchio L.A."/>
        </authorList>
    </citation>
    <scope>NUCLEOTIDE SEQUENCE [LARGE SCALE GENOMIC DNA]</scope>
</reference>
<reference key="7">
    <citation type="journal article" date="2004" name="Genome Res.">
        <title>The status, quality, and expansion of the NIH full-length cDNA project: the Mammalian Gene Collection (MGC).</title>
        <authorList>
            <consortium name="The MGC Project Team"/>
        </authorList>
    </citation>
    <scope>NUCLEOTIDE SEQUENCE [LARGE SCALE MRNA] (ALLELE BETA-2)</scope>
    <scope>VARIANTS HIS-51; GLY-52 AND PRO-53</scope>
    <source>
        <tissue>Lung</tissue>
    </source>
</reference>
<reference key="8">
    <citation type="journal article" date="1990" name="Proc. Natl. Acad. Sci. U.S.A.">
        <title>Human mast cell tryptase: multiple cDNAs and genes reveal a multigene serine protease family.</title>
        <authorList>
            <person name="Vanderslice P."/>
            <person name="Ballinger S.M."/>
            <person name="Tam E.K."/>
            <person name="Goldstein S.M."/>
            <person name="Craik C.S."/>
            <person name="Caughey G.H."/>
        </authorList>
    </citation>
    <scope>NUCLEOTIDE SEQUENCE [MRNA] OF 2-275 (ALLELE BETA-2)</scope>
    <scope>NUCLEOTIDE SEQUENCE [MRNA] OF 9-275 (ALLELE BETA-3)</scope>
    <scope>VARIANTS HIS-51; GLY-52 AND PRO-53</scope>
</reference>
<reference key="9">
    <citation type="journal article" date="2004" name="Blood">
        <title>Intracellular serpin SERPINB6 (PI6) is abundantly expressed by human mast cells and forms complexes with beta-tryptase monomers.</title>
        <authorList>
            <person name="Strik M.C."/>
            <person name="Wolbink A."/>
            <person name="Wouters D."/>
            <person name="Bladergroen B.A."/>
            <person name="Verlaan A.R."/>
            <person name="van Houdt I.S."/>
            <person name="Hijlkema S."/>
            <person name="Hack C.E."/>
            <person name="Kummer J.A."/>
        </authorList>
    </citation>
    <scope>FORMATION OF A COMPLEX WITH SERPINB6</scope>
</reference>
<reference key="10">
    <citation type="journal article" date="2007" name="Int. Immunopharmacol.">
        <title>Active monomers of human beta-tryptase have expanded substrate specificities.</title>
        <authorList>
            <person name="Fukuoka Y."/>
            <person name="Schwartz L.B."/>
        </authorList>
    </citation>
    <scope>SUBUNIT</scope>
</reference>
<reference key="11">
    <citation type="journal article" date="2015" name="Proteomics">
        <title>N-terminome analysis of the human mitochondrial proteome.</title>
        <authorList>
            <person name="Vaca Jacome A.S."/>
            <person name="Rabilloud T."/>
            <person name="Schaeffer-Reiss C."/>
            <person name="Rompais M."/>
            <person name="Ayoub D."/>
            <person name="Lane L."/>
            <person name="Bairoch A."/>
            <person name="Van Dorsselaer A."/>
            <person name="Carapito C."/>
        </authorList>
    </citation>
    <scope>IDENTIFICATION BY MASS SPECTROMETRY [LARGE SCALE ANALYSIS]</scope>
</reference>
<reference key="12">
    <citation type="journal article" date="1998" name="Nature">
        <title>Human beta-tryptase is a ring-like tetramer with active sites facing a central pore.</title>
        <authorList>
            <person name="Pereira P.J.B."/>
            <person name="Bergner A."/>
            <person name="Macedo-Ribeiro S."/>
            <person name="Huber R."/>
            <person name="Matschiner G."/>
            <person name="Fritz H."/>
            <person name="Sommerhoff C.P."/>
            <person name="Bode W."/>
        </authorList>
    </citation>
    <scope>X-RAY CRYSTALLOGRAPHY (3.0 ANGSTROMS)</scope>
</reference>
<reference key="13">
    <citation type="journal article" date="1999" name="Proc. Natl. Acad. Sci. U.S.A.">
        <title>The structure of the human betaII-tryptase tetramer: fo(u)r better or worse.</title>
        <authorList>
            <person name="Sommerhoff C.P."/>
            <person name="Bode W."/>
            <person name="Pereira P.J.B."/>
            <person name="Stubbs M.T."/>
            <person name="Stuerzebecher J."/>
            <person name="Piechottka G.P."/>
            <person name="Matschiner G."/>
            <person name="Bergner A."/>
        </authorList>
    </citation>
    <scope>X-RAY CRYSTALLOGRAPHY (3.4 ANGSTROMS)</scope>
</reference>
<gene>
    <name type="primary">TPSB2</name>
    <name type="synonym">TPS2</name>
</gene>
<evidence type="ECO:0000250" key="1"/>
<evidence type="ECO:0000250" key="2">
    <source>
        <dbReference type="UniProtKB" id="P21845"/>
    </source>
</evidence>
<evidence type="ECO:0000255" key="3"/>
<evidence type="ECO:0000255" key="4">
    <source>
        <dbReference type="PROSITE-ProRule" id="PRU00274"/>
    </source>
</evidence>
<evidence type="ECO:0000269" key="5">
    <source>
    </source>
</evidence>
<evidence type="ECO:0000269" key="6">
    <source>
    </source>
</evidence>
<evidence type="ECO:0000269" key="7">
    <source>
    </source>
</evidence>
<evidence type="ECO:0000269" key="8">
    <source>
    </source>
</evidence>
<evidence type="ECO:0000269" key="9">
    <source>
    </source>
</evidence>
<evidence type="ECO:0000269" key="10">
    <source>
    </source>
</evidence>
<evidence type="ECO:0000269" key="11">
    <source>
    </source>
</evidence>
<evidence type="ECO:0000305" key="12"/>
<evidence type="ECO:0007829" key="13">
    <source>
        <dbReference type="PDB" id="2BM2"/>
    </source>
</evidence>
<evidence type="ECO:0007829" key="14">
    <source>
        <dbReference type="PDB" id="2FPZ"/>
    </source>
</evidence>
<evidence type="ECO:0007829" key="15">
    <source>
        <dbReference type="PDB" id="2ZA5"/>
    </source>
</evidence>
<evidence type="ECO:0007829" key="16">
    <source>
        <dbReference type="PDB" id="3V7T"/>
    </source>
</evidence>
<proteinExistence type="evidence at protein level"/>
<accession>P20231</accession>
<accession>D2E6S0</accession>
<accession>D2E6S2</accession>
<accession>O95827</accession>
<accession>Q15664</accession>
<accession>Q9UQI6</accession>
<accession>Q9UQI7</accession>
<name>TRYB2_HUMAN</name>